<gene>
    <name evidence="2" type="primary">trmB</name>
    <name type="ordered locus">Shewmr4_1181</name>
</gene>
<dbReference type="EC" id="2.1.1.33" evidence="2"/>
<dbReference type="EMBL" id="CP000446">
    <property type="protein sequence ID" value="ABI38261.1"/>
    <property type="molecule type" value="Genomic_DNA"/>
</dbReference>
<dbReference type="RefSeq" id="WP_011621969.1">
    <property type="nucleotide sequence ID" value="NC_008321.1"/>
</dbReference>
<dbReference type="SMR" id="Q0HL06"/>
<dbReference type="GeneID" id="94727193"/>
<dbReference type="KEGG" id="she:Shewmr4_1181"/>
<dbReference type="HOGENOM" id="CLU_050910_0_1_6"/>
<dbReference type="UniPathway" id="UPA00989"/>
<dbReference type="GO" id="GO:0043527">
    <property type="term" value="C:tRNA methyltransferase complex"/>
    <property type="evidence" value="ECO:0007669"/>
    <property type="project" value="TreeGrafter"/>
</dbReference>
<dbReference type="GO" id="GO:0008176">
    <property type="term" value="F:tRNA (guanine(46)-N7)-methyltransferase activity"/>
    <property type="evidence" value="ECO:0007669"/>
    <property type="project" value="UniProtKB-UniRule"/>
</dbReference>
<dbReference type="CDD" id="cd02440">
    <property type="entry name" value="AdoMet_MTases"/>
    <property type="match status" value="1"/>
</dbReference>
<dbReference type="FunFam" id="3.40.50.150:FF:000024">
    <property type="entry name" value="tRNA (guanine-N(7)-)-methyltransferase"/>
    <property type="match status" value="1"/>
</dbReference>
<dbReference type="Gene3D" id="3.40.50.150">
    <property type="entry name" value="Vaccinia Virus protein VP39"/>
    <property type="match status" value="1"/>
</dbReference>
<dbReference type="HAMAP" id="MF_01057">
    <property type="entry name" value="tRNA_methyltr_TrmB"/>
    <property type="match status" value="1"/>
</dbReference>
<dbReference type="InterPro" id="IPR029063">
    <property type="entry name" value="SAM-dependent_MTases_sf"/>
</dbReference>
<dbReference type="InterPro" id="IPR003358">
    <property type="entry name" value="tRNA_(Gua-N-7)_MeTrfase_Trmb"/>
</dbReference>
<dbReference type="InterPro" id="IPR055361">
    <property type="entry name" value="tRNA_methyltr_TrmB_bact"/>
</dbReference>
<dbReference type="NCBIfam" id="TIGR00091">
    <property type="entry name" value="tRNA (guanosine(46)-N7)-methyltransferase TrmB"/>
    <property type="match status" value="1"/>
</dbReference>
<dbReference type="PANTHER" id="PTHR23417">
    <property type="entry name" value="3-DEOXY-D-MANNO-OCTULOSONIC-ACID TRANSFERASE/TRNA GUANINE-N 7 - -METHYLTRANSFERASE"/>
    <property type="match status" value="1"/>
</dbReference>
<dbReference type="PANTHER" id="PTHR23417:SF14">
    <property type="entry name" value="PENTACOTRIPEPTIDE-REPEAT REGION OF PRORP DOMAIN-CONTAINING PROTEIN"/>
    <property type="match status" value="1"/>
</dbReference>
<dbReference type="Pfam" id="PF02390">
    <property type="entry name" value="Methyltransf_4"/>
    <property type="match status" value="1"/>
</dbReference>
<dbReference type="SUPFAM" id="SSF53335">
    <property type="entry name" value="S-adenosyl-L-methionine-dependent methyltransferases"/>
    <property type="match status" value="1"/>
</dbReference>
<dbReference type="PROSITE" id="PS51625">
    <property type="entry name" value="SAM_MT_TRMB"/>
    <property type="match status" value="1"/>
</dbReference>
<reference key="1">
    <citation type="submission" date="2006-08" db="EMBL/GenBank/DDBJ databases">
        <title>Complete sequence of Shewanella sp. MR-4.</title>
        <authorList>
            <consortium name="US DOE Joint Genome Institute"/>
            <person name="Copeland A."/>
            <person name="Lucas S."/>
            <person name="Lapidus A."/>
            <person name="Barry K."/>
            <person name="Detter J.C."/>
            <person name="Glavina del Rio T."/>
            <person name="Hammon N."/>
            <person name="Israni S."/>
            <person name="Dalin E."/>
            <person name="Tice H."/>
            <person name="Pitluck S."/>
            <person name="Kiss H."/>
            <person name="Brettin T."/>
            <person name="Bruce D."/>
            <person name="Han C."/>
            <person name="Tapia R."/>
            <person name="Gilna P."/>
            <person name="Schmutz J."/>
            <person name="Larimer F."/>
            <person name="Land M."/>
            <person name="Hauser L."/>
            <person name="Kyrpides N."/>
            <person name="Mikhailova N."/>
            <person name="Nealson K."/>
            <person name="Konstantinidis K."/>
            <person name="Klappenbach J."/>
            <person name="Tiedje J."/>
            <person name="Richardson P."/>
        </authorList>
    </citation>
    <scope>NUCLEOTIDE SEQUENCE [LARGE SCALE GENOMIC DNA]</scope>
    <source>
        <strain>MR-4</strain>
    </source>
</reference>
<comment type="function">
    <text evidence="2">Catalyzes the formation of N(7)-methylguanine at position 46 (m7G46) in tRNA.</text>
</comment>
<comment type="catalytic activity">
    <reaction evidence="2">
        <text>guanosine(46) in tRNA + S-adenosyl-L-methionine = N(7)-methylguanosine(46) in tRNA + S-adenosyl-L-homocysteine</text>
        <dbReference type="Rhea" id="RHEA:42708"/>
        <dbReference type="Rhea" id="RHEA-COMP:10188"/>
        <dbReference type="Rhea" id="RHEA-COMP:10189"/>
        <dbReference type="ChEBI" id="CHEBI:57856"/>
        <dbReference type="ChEBI" id="CHEBI:59789"/>
        <dbReference type="ChEBI" id="CHEBI:74269"/>
        <dbReference type="ChEBI" id="CHEBI:74480"/>
        <dbReference type="EC" id="2.1.1.33"/>
    </reaction>
</comment>
<comment type="pathway">
    <text evidence="2">tRNA modification; N(7)-methylguanine-tRNA biosynthesis.</text>
</comment>
<comment type="similarity">
    <text evidence="2">Belongs to the class I-like SAM-binding methyltransferase superfamily. TrmB family.</text>
</comment>
<organism>
    <name type="scientific">Shewanella sp. (strain MR-4)</name>
    <dbReference type="NCBI Taxonomy" id="60480"/>
    <lineage>
        <taxon>Bacteria</taxon>
        <taxon>Pseudomonadati</taxon>
        <taxon>Pseudomonadota</taxon>
        <taxon>Gammaproteobacteria</taxon>
        <taxon>Alteromonadales</taxon>
        <taxon>Shewanellaceae</taxon>
        <taxon>Shewanella</taxon>
    </lineage>
</organism>
<feature type="chain" id="PRO_0000288225" description="tRNA (guanine-N(7)-)-methyltransferase">
    <location>
        <begin position="1"/>
        <end position="238"/>
    </location>
</feature>
<feature type="active site" evidence="1">
    <location>
        <position position="143"/>
    </location>
</feature>
<feature type="binding site" evidence="2">
    <location>
        <position position="68"/>
    </location>
    <ligand>
        <name>S-adenosyl-L-methionine</name>
        <dbReference type="ChEBI" id="CHEBI:59789"/>
    </ligand>
</feature>
<feature type="binding site" evidence="2">
    <location>
        <position position="93"/>
    </location>
    <ligand>
        <name>S-adenosyl-L-methionine</name>
        <dbReference type="ChEBI" id="CHEBI:59789"/>
    </ligand>
</feature>
<feature type="binding site" evidence="2">
    <location>
        <position position="120"/>
    </location>
    <ligand>
        <name>S-adenosyl-L-methionine</name>
        <dbReference type="ChEBI" id="CHEBI:59789"/>
    </ligand>
</feature>
<feature type="binding site" evidence="2">
    <location>
        <position position="143"/>
    </location>
    <ligand>
        <name>S-adenosyl-L-methionine</name>
        <dbReference type="ChEBI" id="CHEBI:59789"/>
    </ligand>
</feature>
<feature type="binding site" evidence="2">
    <location>
        <position position="147"/>
    </location>
    <ligand>
        <name>substrate</name>
    </ligand>
</feature>
<feature type="binding site" evidence="2">
    <location>
        <position position="179"/>
    </location>
    <ligand>
        <name>substrate</name>
    </ligand>
</feature>
<feature type="binding site" evidence="2">
    <location>
        <begin position="216"/>
        <end position="219"/>
    </location>
    <ligand>
        <name>substrate</name>
    </ligand>
</feature>
<keyword id="KW-0489">Methyltransferase</keyword>
<keyword id="KW-0949">S-adenosyl-L-methionine</keyword>
<keyword id="KW-0808">Transferase</keyword>
<keyword id="KW-0819">tRNA processing</keyword>
<accession>Q0HL06</accession>
<name>TRMB_SHESM</name>
<evidence type="ECO:0000250" key="1"/>
<evidence type="ECO:0000255" key="2">
    <source>
        <dbReference type="HAMAP-Rule" id="MF_01057"/>
    </source>
</evidence>
<sequence>MSEVTTAEFNEEGKYLRKIRSFVLREGRLTKGQAQAIETQWPTMGLDYSPTPLNLTEVFGREADTVLEIGFGMGASLVQMAQEAPEQNFIGIEVHKPGVGSCLSDAAAAGVTNLRVYHHDAMEVLEHAIADGSLARVQLFFPDPWHKKRHHKRRIVQAEFAELIRRKLKIGGVFHMATDWENYSEHMLEVMNAANGYKNQSADGTVVPRPDHRPLTKFEARGHRLGHGVWDLMFERIA</sequence>
<protein>
    <recommendedName>
        <fullName evidence="2">tRNA (guanine-N(7)-)-methyltransferase</fullName>
        <ecNumber evidence="2">2.1.1.33</ecNumber>
    </recommendedName>
    <alternativeName>
        <fullName evidence="2">tRNA (guanine(46)-N(7))-methyltransferase</fullName>
    </alternativeName>
    <alternativeName>
        <fullName evidence="2">tRNA(m7G46)-methyltransferase</fullName>
    </alternativeName>
</protein>
<proteinExistence type="inferred from homology"/>